<gene>
    <name evidence="1" type="primary">mraY</name>
    <name type="ordered locus">CJE0483</name>
</gene>
<sequence length="353" mass="39284">MYYLSDLSHYAFFTYISVRAGFAFFIALCLSLFLMPKFITWAKAKNASQPIYEYAPETHKTKCHTPTMGGLIFISSAVIASLFCIKFDNIFAISALLCLILFCLIGLIDDLGKVLKKDNHSGLSPRMKLLAQIIAGLICILPLYFSSELSTELFIPFYKHPLFDMEIFAIAFWILVLISSSNAVNLTDGLDGLATVPSIFSLSTLGIFLYLSGNLNYSEYLLLPKIQGLGEVVIICAALIGALMGFLWYNCYPAQVFMGDSGSLALGGFIGFLAIISKNEILLLLIGFVFVLETVSVILQVGSFKIFNKRVFKMAPIHHHFEKVGWVENKIIVRFWMIALLSNLLALASIKLR</sequence>
<name>MRAY_CAMJR</name>
<protein>
    <recommendedName>
        <fullName evidence="1">Phospho-N-acetylmuramoyl-pentapeptide-transferase</fullName>
        <ecNumber evidence="1">2.7.8.13</ecNumber>
    </recommendedName>
    <alternativeName>
        <fullName evidence="1">UDP-MurNAc-pentapeptide phosphotransferase</fullName>
    </alternativeName>
</protein>
<organism>
    <name type="scientific">Campylobacter jejuni (strain RM1221)</name>
    <dbReference type="NCBI Taxonomy" id="195099"/>
    <lineage>
        <taxon>Bacteria</taxon>
        <taxon>Pseudomonadati</taxon>
        <taxon>Campylobacterota</taxon>
        <taxon>Epsilonproteobacteria</taxon>
        <taxon>Campylobacterales</taxon>
        <taxon>Campylobacteraceae</taxon>
        <taxon>Campylobacter</taxon>
    </lineage>
</organism>
<keyword id="KW-0131">Cell cycle</keyword>
<keyword id="KW-0132">Cell division</keyword>
<keyword id="KW-0997">Cell inner membrane</keyword>
<keyword id="KW-1003">Cell membrane</keyword>
<keyword id="KW-0133">Cell shape</keyword>
<keyword id="KW-0961">Cell wall biogenesis/degradation</keyword>
<keyword id="KW-0460">Magnesium</keyword>
<keyword id="KW-0472">Membrane</keyword>
<keyword id="KW-0479">Metal-binding</keyword>
<keyword id="KW-0573">Peptidoglycan synthesis</keyword>
<keyword id="KW-0808">Transferase</keyword>
<keyword id="KW-0812">Transmembrane</keyword>
<keyword id="KW-1133">Transmembrane helix</keyword>
<evidence type="ECO:0000255" key="1">
    <source>
        <dbReference type="HAMAP-Rule" id="MF_00038"/>
    </source>
</evidence>
<proteinExistence type="inferred from homology"/>
<feature type="chain" id="PRO_0000108802" description="Phospho-N-acetylmuramoyl-pentapeptide-transferase">
    <location>
        <begin position="1"/>
        <end position="353"/>
    </location>
</feature>
<feature type="transmembrane region" description="Helical" evidence="1">
    <location>
        <begin position="22"/>
        <end position="42"/>
    </location>
</feature>
<feature type="transmembrane region" description="Helical" evidence="1">
    <location>
        <begin position="65"/>
        <end position="85"/>
    </location>
</feature>
<feature type="transmembrane region" description="Helical" evidence="1">
    <location>
        <begin position="88"/>
        <end position="108"/>
    </location>
</feature>
<feature type="transmembrane region" description="Helical" evidence="1">
    <location>
        <begin position="129"/>
        <end position="149"/>
    </location>
</feature>
<feature type="transmembrane region" description="Helical" evidence="1">
    <location>
        <begin position="161"/>
        <end position="181"/>
    </location>
</feature>
<feature type="transmembrane region" description="Helical" evidence="1">
    <location>
        <begin position="192"/>
        <end position="212"/>
    </location>
</feature>
<feature type="transmembrane region" description="Helical" evidence="1">
    <location>
        <begin position="228"/>
        <end position="248"/>
    </location>
</feature>
<feature type="transmembrane region" description="Helical" evidence="1">
    <location>
        <begin position="256"/>
        <end position="276"/>
    </location>
</feature>
<feature type="transmembrane region" description="Helical" evidence="1">
    <location>
        <begin position="281"/>
        <end position="301"/>
    </location>
</feature>
<feature type="transmembrane region" description="Helical" evidence="1">
    <location>
        <begin position="330"/>
        <end position="350"/>
    </location>
</feature>
<dbReference type="EC" id="2.7.8.13" evidence="1"/>
<dbReference type="EMBL" id="CP000025">
    <property type="protein sequence ID" value="AAW35071.1"/>
    <property type="molecule type" value="Genomic_DNA"/>
</dbReference>
<dbReference type="RefSeq" id="WP_002859004.1">
    <property type="nucleotide sequence ID" value="NC_003912.7"/>
</dbReference>
<dbReference type="SMR" id="Q5HW33"/>
<dbReference type="DNASU" id="3231244"/>
<dbReference type="KEGG" id="cjr:CJE0483"/>
<dbReference type="HOGENOM" id="CLU_023982_0_0_7"/>
<dbReference type="UniPathway" id="UPA00219"/>
<dbReference type="GO" id="GO:0005886">
    <property type="term" value="C:plasma membrane"/>
    <property type="evidence" value="ECO:0007669"/>
    <property type="project" value="UniProtKB-SubCell"/>
</dbReference>
<dbReference type="GO" id="GO:0046872">
    <property type="term" value="F:metal ion binding"/>
    <property type="evidence" value="ECO:0007669"/>
    <property type="project" value="UniProtKB-KW"/>
</dbReference>
<dbReference type="GO" id="GO:0008963">
    <property type="term" value="F:phospho-N-acetylmuramoyl-pentapeptide-transferase activity"/>
    <property type="evidence" value="ECO:0007669"/>
    <property type="project" value="UniProtKB-UniRule"/>
</dbReference>
<dbReference type="GO" id="GO:0051992">
    <property type="term" value="F:UDP-N-acetylmuramoyl-L-alanyl-D-glutamyl-meso-2,6-diaminopimelyl-D-alanyl-D-alanine:undecaprenyl-phosphate transferase activity"/>
    <property type="evidence" value="ECO:0007669"/>
    <property type="project" value="RHEA"/>
</dbReference>
<dbReference type="GO" id="GO:0051301">
    <property type="term" value="P:cell division"/>
    <property type="evidence" value="ECO:0007669"/>
    <property type="project" value="UniProtKB-KW"/>
</dbReference>
<dbReference type="GO" id="GO:0071555">
    <property type="term" value="P:cell wall organization"/>
    <property type="evidence" value="ECO:0007669"/>
    <property type="project" value="UniProtKB-KW"/>
</dbReference>
<dbReference type="GO" id="GO:0009252">
    <property type="term" value="P:peptidoglycan biosynthetic process"/>
    <property type="evidence" value="ECO:0007669"/>
    <property type="project" value="UniProtKB-UniRule"/>
</dbReference>
<dbReference type="GO" id="GO:0008360">
    <property type="term" value="P:regulation of cell shape"/>
    <property type="evidence" value="ECO:0007669"/>
    <property type="project" value="UniProtKB-KW"/>
</dbReference>
<dbReference type="CDD" id="cd06852">
    <property type="entry name" value="GT_MraY"/>
    <property type="match status" value="1"/>
</dbReference>
<dbReference type="HAMAP" id="MF_00038">
    <property type="entry name" value="MraY"/>
    <property type="match status" value="1"/>
</dbReference>
<dbReference type="InterPro" id="IPR000715">
    <property type="entry name" value="Glycosyl_transferase_4"/>
</dbReference>
<dbReference type="InterPro" id="IPR003524">
    <property type="entry name" value="PNAcMuramoyl-5peptid_Trfase"/>
</dbReference>
<dbReference type="InterPro" id="IPR018480">
    <property type="entry name" value="PNAcMuramoyl-5peptid_Trfase_CS"/>
</dbReference>
<dbReference type="NCBIfam" id="TIGR00445">
    <property type="entry name" value="mraY"/>
    <property type="match status" value="1"/>
</dbReference>
<dbReference type="PANTHER" id="PTHR22926">
    <property type="entry name" value="PHOSPHO-N-ACETYLMURAMOYL-PENTAPEPTIDE-TRANSFERASE"/>
    <property type="match status" value="1"/>
</dbReference>
<dbReference type="PANTHER" id="PTHR22926:SF5">
    <property type="entry name" value="PHOSPHO-N-ACETYLMURAMOYL-PENTAPEPTIDE-TRANSFERASE HOMOLOG"/>
    <property type="match status" value="1"/>
</dbReference>
<dbReference type="Pfam" id="PF00953">
    <property type="entry name" value="Glycos_transf_4"/>
    <property type="match status" value="1"/>
</dbReference>
<dbReference type="PROSITE" id="PS01347">
    <property type="entry name" value="MRAY_1"/>
    <property type="match status" value="1"/>
</dbReference>
<dbReference type="PROSITE" id="PS01348">
    <property type="entry name" value="MRAY_2"/>
    <property type="match status" value="1"/>
</dbReference>
<reference key="1">
    <citation type="journal article" date="2005" name="PLoS Biol.">
        <title>Major structural differences and novel potential virulence mechanisms from the genomes of multiple Campylobacter species.</title>
        <authorList>
            <person name="Fouts D.E."/>
            <person name="Mongodin E.F."/>
            <person name="Mandrell R.E."/>
            <person name="Miller W.G."/>
            <person name="Rasko D.A."/>
            <person name="Ravel J."/>
            <person name="Brinkac L.M."/>
            <person name="DeBoy R.T."/>
            <person name="Parker C.T."/>
            <person name="Daugherty S.C."/>
            <person name="Dodson R.J."/>
            <person name="Durkin A.S."/>
            <person name="Madupu R."/>
            <person name="Sullivan S.A."/>
            <person name="Shetty J.U."/>
            <person name="Ayodeji M.A."/>
            <person name="Shvartsbeyn A."/>
            <person name="Schatz M.C."/>
            <person name="Badger J.H."/>
            <person name="Fraser C.M."/>
            <person name="Nelson K.E."/>
        </authorList>
    </citation>
    <scope>NUCLEOTIDE SEQUENCE [LARGE SCALE GENOMIC DNA]</scope>
    <source>
        <strain>RM1221</strain>
    </source>
</reference>
<comment type="function">
    <text evidence="1">Catalyzes the initial step of the lipid cycle reactions in the biosynthesis of the cell wall peptidoglycan: transfers peptidoglycan precursor phospho-MurNAc-pentapeptide from UDP-MurNAc-pentapeptide onto the lipid carrier undecaprenyl phosphate, yielding undecaprenyl-pyrophosphoryl-MurNAc-pentapeptide, known as lipid I.</text>
</comment>
<comment type="catalytic activity">
    <reaction evidence="1">
        <text>UDP-N-acetyl-alpha-D-muramoyl-L-alanyl-gamma-D-glutamyl-meso-2,6-diaminopimeloyl-D-alanyl-D-alanine + di-trans,octa-cis-undecaprenyl phosphate = di-trans,octa-cis-undecaprenyl diphospho-N-acetyl-alpha-D-muramoyl-L-alanyl-D-glutamyl-meso-2,6-diaminopimeloyl-D-alanyl-D-alanine + UMP</text>
        <dbReference type="Rhea" id="RHEA:28386"/>
        <dbReference type="ChEBI" id="CHEBI:57865"/>
        <dbReference type="ChEBI" id="CHEBI:60392"/>
        <dbReference type="ChEBI" id="CHEBI:61386"/>
        <dbReference type="ChEBI" id="CHEBI:61387"/>
        <dbReference type="EC" id="2.7.8.13"/>
    </reaction>
</comment>
<comment type="cofactor">
    <cofactor evidence="1">
        <name>Mg(2+)</name>
        <dbReference type="ChEBI" id="CHEBI:18420"/>
    </cofactor>
</comment>
<comment type="pathway">
    <text evidence="1">Cell wall biogenesis; peptidoglycan biosynthesis.</text>
</comment>
<comment type="subcellular location">
    <subcellularLocation>
        <location evidence="1">Cell inner membrane</location>
        <topology evidence="1">Multi-pass membrane protein</topology>
    </subcellularLocation>
</comment>
<comment type="similarity">
    <text evidence="1">Belongs to the glycosyltransferase 4 family. MraY subfamily.</text>
</comment>
<accession>Q5HW33</accession>